<accession>A6LRM5</accession>
<gene>
    <name evidence="1" type="primary">rpsT</name>
    <name type="ordered locus">Cbei_0821</name>
</gene>
<reference key="1">
    <citation type="submission" date="2007-06" db="EMBL/GenBank/DDBJ databases">
        <title>Complete sequence of Clostridium beijerinckii NCIMB 8052.</title>
        <authorList>
            <consortium name="US DOE Joint Genome Institute"/>
            <person name="Copeland A."/>
            <person name="Lucas S."/>
            <person name="Lapidus A."/>
            <person name="Barry K."/>
            <person name="Detter J.C."/>
            <person name="Glavina del Rio T."/>
            <person name="Hammon N."/>
            <person name="Israni S."/>
            <person name="Dalin E."/>
            <person name="Tice H."/>
            <person name="Pitluck S."/>
            <person name="Sims D."/>
            <person name="Brettin T."/>
            <person name="Bruce D."/>
            <person name="Tapia R."/>
            <person name="Brainard J."/>
            <person name="Schmutz J."/>
            <person name="Larimer F."/>
            <person name="Land M."/>
            <person name="Hauser L."/>
            <person name="Kyrpides N."/>
            <person name="Mikhailova N."/>
            <person name="Bennet G."/>
            <person name="Cann I."/>
            <person name="Chen J.-S."/>
            <person name="Contreras A.L."/>
            <person name="Jones D."/>
            <person name="Kashket E."/>
            <person name="Mitchell W."/>
            <person name="Stoddard S."/>
            <person name="Schwarz W."/>
            <person name="Qureshi N."/>
            <person name="Young M."/>
            <person name="Shi Z."/>
            <person name="Ezeji T."/>
            <person name="White B."/>
            <person name="Blaschek H."/>
            <person name="Richardson P."/>
        </authorList>
    </citation>
    <scope>NUCLEOTIDE SEQUENCE [LARGE SCALE GENOMIC DNA]</scope>
    <source>
        <strain>ATCC 51743 / NCIMB 8052</strain>
    </source>
</reference>
<keyword id="KW-0687">Ribonucleoprotein</keyword>
<keyword id="KW-0689">Ribosomal protein</keyword>
<keyword id="KW-0694">RNA-binding</keyword>
<keyword id="KW-0699">rRNA-binding</keyword>
<proteinExistence type="inferred from homology"/>
<evidence type="ECO:0000255" key="1">
    <source>
        <dbReference type="HAMAP-Rule" id="MF_00500"/>
    </source>
</evidence>
<evidence type="ECO:0000305" key="2"/>
<organism>
    <name type="scientific">Clostridium beijerinckii (strain ATCC 51743 / NCIMB 8052)</name>
    <name type="common">Clostridium acetobutylicum</name>
    <dbReference type="NCBI Taxonomy" id="290402"/>
    <lineage>
        <taxon>Bacteria</taxon>
        <taxon>Bacillati</taxon>
        <taxon>Bacillota</taxon>
        <taxon>Clostridia</taxon>
        <taxon>Eubacteriales</taxon>
        <taxon>Clostridiaceae</taxon>
        <taxon>Clostridium</taxon>
    </lineage>
</organism>
<protein>
    <recommendedName>
        <fullName evidence="1">Small ribosomal subunit protein bS20</fullName>
    </recommendedName>
    <alternativeName>
        <fullName evidence="2">30S ribosomal protein S20</fullName>
    </alternativeName>
</protein>
<feature type="chain" id="PRO_1000081421" description="Small ribosomal subunit protein bS20">
    <location>
        <begin position="1"/>
        <end position="87"/>
    </location>
</feature>
<dbReference type="EMBL" id="CP000721">
    <property type="protein sequence ID" value="ABR33005.1"/>
    <property type="molecule type" value="Genomic_DNA"/>
</dbReference>
<dbReference type="RefSeq" id="WP_011968165.1">
    <property type="nucleotide sequence ID" value="NC_009617.1"/>
</dbReference>
<dbReference type="SMR" id="A6LRM5"/>
<dbReference type="GeneID" id="66343762"/>
<dbReference type="KEGG" id="cbe:Cbei_0821"/>
<dbReference type="eggNOG" id="COG0268">
    <property type="taxonomic scope" value="Bacteria"/>
</dbReference>
<dbReference type="HOGENOM" id="CLU_160655_1_0_9"/>
<dbReference type="Proteomes" id="UP000000565">
    <property type="component" value="Chromosome"/>
</dbReference>
<dbReference type="GO" id="GO:0005829">
    <property type="term" value="C:cytosol"/>
    <property type="evidence" value="ECO:0007669"/>
    <property type="project" value="TreeGrafter"/>
</dbReference>
<dbReference type="GO" id="GO:0015935">
    <property type="term" value="C:small ribosomal subunit"/>
    <property type="evidence" value="ECO:0007669"/>
    <property type="project" value="TreeGrafter"/>
</dbReference>
<dbReference type="GO" id="GO:0070181">
    <property type="term" value="F:small ribosomal subunit rRNA binding"/>
    <property type="evidence" value="ECO:0007669"/>
    <property type="project" value="TreeGrafter"/>
</dbReference>
<dbReference type="GO" id="GO:0003735">
    <property type="term" value="F:structural constituent of ribosome"/>
    <property type="evidence" value="ECO:0007669"/>
    <property type="project" value="InterPro"/>
</dbReference>
<dbReference type="GO" id="GO:0006412">
    <property type="term" value="P:translation"/>
    <property type="evidence" value="ECO:0007669"/>
    <property type="project" value="UniProtKB-UniRule"/>
</dbReference>
<dbReference type="FunFam" id="1.20.58.110:FF:000001">
    <property type="entry name" value="30S ribosomal protein S20"/>
    <property type="match status" value="1"/>
</dbReference>
<dbReference type="Gene3D" id="1.20.58.110">
    <property type="entry name" value="Ribosomal protein S20"/>
    <property type="match status" value="1"/>
</dbReference>
<dbReference type="HAMAP" id="MF_00500">
    <property type="entry name" value="Ribosomal_bS20"/>
    <property type="match status" value="1"/>
</dbReference>
<dbReference type="InterPro" id="IPR002583">
    <property type="entry name" value="Ribosomal_bS20"/>
</dbReference>
<dbReference type="InterPro" id="IPR036510">
    <property type="entry name" value="Ribosomal_bS20_sf"/>
</dbReference>
<dbReference type="NCBIfam" id="TIGR00029">
    <property type="entry name" value="S20"/>
    <property type="match status" value="1"/>
</dbReference>
<dbReference type="PANTHER" id="PTHR33398">
    <property type="entry name" value="30S RIBOSOMAL PROTEIN S20"/>
    <property type="match status" value="1"/>
</dbReference>
<dbReference type="PANTHER" id="PTHR33398:SF1">
    <property type="entry name" value="SMALL RIBOSOMAL SUBUNIT PROTEIN BS20C"/>
    <property type="match status" value="1"/>
</dbReference>
<dbReference type="Pfam" id="PF01649">
    <property type="entry name" value="Ribosomal_S20p"/>
    <property type="match status" value="1"/>
</dbReference>
<dbReference type="SUPFAM" id="SSF46992">
    <property type="entry name" value="Ribosomal protein S20"/>
    <property type="match status" value="1"/>
</dbReference>
<name>RS20_CLOB8</name>
<comment type="function">
    <text evidence="1">Binds directly to 16S ribosomal RNA.</text>
</comment>
<comment type="similarity">
    <text evidence="1">Belongs to the bacterial ribosomal protein bS20 family.</text>
</comment>
<sequence>MANIKSAKKRIKVTETKTLKNRMIKSALKTTIKKFEAAIEAKNNEEAKALFTSVVKSLDMAATKGVVHKNMAARKKSRLAAKLNSMA</sequence>